<reference key="1">
    <citation type="submission" date="1993-09" db="EMBL/GenBank/DDBJ databases">
        <authorList>
            <person name="Takemaru K."/>
            <person name="Sato T."/>
            <person name="Kobayashi Y."/>
        </authorList>
    </citation>
    <scope>NUCLEOTIDE SEQUENCE [GENOMIC DNA]</scope>
    <source>
        <strain>168 / JH642</strain>
    </source>
</reference>
<reference key="2">
    <citation type="journal article" date="1996" name="Microbiology">
        <title>Systematic sequencing of the 283 kb 210 degrees-232 degrees region of the Bacillus subtilis genome containing the skin element and many sporulation genes.</title>
        <authorList>
            <person name="Mizuno M."/>
            <person name="Masuda S."/>
            <person name="Takemaru K."/>
            <person name="Hosono S."/>
            <person name="Sato T."/>
            <person name="Takeuchi M."/>
            <person name="Kobayashi Y."/>
        </authorList>
    </citation>
    <scope>NUCLEOTIDE SEQUENCE [GENOMIC DNA]</scope>
    <source>
        <strain>168 / JH642</strain>
    </source>
</reference>
<reference key="3">
    <citation type="journal article" date="1997" name="Nature">
        <title>The complete genome sequence of the Gram-positive bacterium Bacillus subtilis.</title>
        <authorList>
            <person name="Kunst F."/>
            <person name="Ogasawara N."/>
            <person name="Moszer I."/>
            <person name="Albertini A.M."/>
            <person name="Alloni G."/>
            <person name="Azevedo V."/>
            <person name="Bertero M.G."/>
            <person name="Bessieres P."/>
            <person name="Bolotin A."/>
            <person name="Borchert S."/>
            <person name="Borriss R."/>
            <person name="Boursier L."/>
            <person name="Brans A."/>
            <person name="Braun M."/>
            <person name="Brignell S.C."/>
            <person name="Bron S."/>
            <person name="Brouillet S."/>
            <person name="Bruschi C.V."/>
            <person name="Caldwell B."/>
            <person name="Capuano V."/>
            <person name="Carter N.M."/>
            <person name="Choi S.-K."/>
            <person name="Codani J.-J."/>
            <person name="Connerton I.F."/>
            <person name="Cummings N.J."/>
            <person name="Daniel R.A."/>
            <person name="Denizot F."/>
            <person name="Devine K.M."/>
            <person name="Duesterhoeft A."/>
            <person name="Ehrlich S.D."/>
            <person name="Emmerson P.T."/>
            <person name="Entian K.-D."/>
            <person name="Errington J."/>
            <person name="Fabret C."/>
            <person name="Ferrari E."/>
            <person name="Foulger D."/>
            <person name="Fritz C."/>
            <person name="Fujita M."/>
            <person name="Fujita Y."/>
            <person name="Fuma S."/>
            <person name="Galizzi A."/>
            <person name="Galleron N."/>
            <person name="Ghim S.-Y."/>
            <person name="Glaser P."/>
            <person name="Goffeau A."/>
            <person name="Golightly E.J."/>
            <person name="Grandi G."/>
            <person name="Guiseppi G."/>
            <person name="Guy B.J."/>
            <person name="Haga K."/>
            <person name="Haiech J."/>
            <person name="Harwood C.R."/>
            <person name="Henaut A."/>
            <person name="Hilbert H."/>
            <person name="Holsappel S."/>
            <person name="Hosono S."/>
            <person name="Hullo M.-F."/>
            <person name="Itaya M."/>
            <person name="Jones L.-M."/>
            <person name="Joris B."/>
            <person name="Karamata D."/>
            <person name="Kasahara Y."/>
            <person name="Klaerr-Blanchard M."/>
            <person name="Klein C."/>
            <person name="Kobayashi Y."/>
            <person name="Koetter P."/>
            <person name="Koningstein G."/>
            <person name="Krogh S."/>
            <person name="Kumano M."/>
            <person name="Kurita K."/>
            <person name="Lapidus A."/>
            <person name="Lardinois S."/>
            <person name="Lauber J."/>
            <person name="Lazarevic V."/>
            <person name="Lee S.-M."/>
            <person name="Levine A."/>
            <person name="Liu H."/>
            <person name="Masuda S."/>
            <person name="Mauel C."/>
            <person name="Medigue C."/>
            <person name="Medina N."/>
            <person name="Mellado R.P."/>
            <person name="Mizuno M."/>
            <person name="Moestl D."/>
            <person name="Nakai S."/>
            <person name="Noback M."/>
            <person name="Noone D."/>
            <person name="O'Reilly M."/>
            <person name="Ogawa K."/>
            <person name="Ogiwara A."/>
            <person name="Oudega B."/>
            <person name="Park S.-H."/>
            <person name="Parro V."/>
            <person name="Pohl T.M."/>
            <person name="Portetelle D."/>
            <person name="Porwollik S."/>
            <person name="Prescott A.M."/>
            <person name="Presecan E."/>
            <person name="Pujic P."/>
            <person name="Purnelle B."/>
            <person name="Rapoport G."/>
            <person name="Rey M."/>
            <person name="Reynolds S."/>
            <person name="Rieger M."/>
            <person name="Rivolta C."/>
            <person name="Rocha E."/>
            <person name="Roche B."/>
            <person name="Rose M."/>
            <person name="Sadaie Y."/>
            <person name="Sato T."/>
            <person name="Scanlan E."/>
            <person name="Schleich S."/>
            <person name="Schroeter R."/>
            <person name="Scoffone F."/>
            <person name="Sekiguchi J."/>
            <person name="Sekowska A."/>
            <person name="Seror S.J."/>
            <person name="Serror P."/>
            <person name="Shin B.-S."/>
            <person name="Soldo B."/>
            <person name="Sorokin A."/>
            <person name="Tacconi E."/>
            <person name="Takagi T."/>
            <person name="Takahashi H."/>
            <person name="Takemaru K."/>
            <person name="Takeuchi M."/>
            <person name="Tamakoshi A."/>
            <person name="Tanaka T."/>
            <person name="Terpstra P."/>
            <person name="Tognoni A."/>
            <person name="Tosato V."/>
            <person name="Uchiyama S."/>
            <person name="Vandenbol M."/>
            <person name="Vannier F."/>
            <person name="Vassarotti A."/>
            <person name="Viari A."/>
            <person name="Wambutt R."/>
            <person name="Wedler E."/>
            <person name="Wedler H."/>
            <person name="Weitzenegger T."/>
            <person name="Winters P."/>
            <person name="Wipat A."/>
            <person name="Yamamoto H."/>
            <person name="Yamane K."/>
            <person name="Yasumoto K."/>
            <person name="Yata K."/>
            <person name="Yoshida K."/>
            <person name="Yoshikawa H.-F."/>
            <person name="Zumstein E."/>
            <person name="Yoshikawa H."/>
            <person name="Danchin A."/>
        </authorList>
    </citation>
    <scope>NUCLEOTIDE SEQUENCE [LARGE SCALE GENOMIC DNA]</scope>
    <source>
        <strain>168</strain>
    </source>
</reference>
<dbReference type="EMBL" id="D17650">
    <property type="protein sequence ID" value="BAA04542.1"/>
    <property type="molecule type" value="Genomic_DNA"/>
</dbReference>
<dbReference type="EMBL" id="D84432">
    <property type="protein sequence ID" value="BAA12458.1"/>
    <property type="molecule type" value="Genomic_DNA"/>
</dbReference>
<dbReference type="EMBL" id="AL009126">
    <property type="protein sequence ID" value="CAB14495.1"/>
    <property type="molecule type" value="Genomic_DNA"/>
</dbReference>
<dbReference type="PIR" id="A69713">
    <property type="entry name" value="A69713"/>
</dbReference>
<dbReference type="RefSeq" id="NP_390431.1">
    <property type="nucleotide sequence ID" value="NC_000964.3"/>
</dbReference>
<dbReference type="RefSeq" id="WP_003229993.1">
    <property type="nucleotide sequence ID" value="NZ_OZ025638.1"/>
</dbReference>
<dbReference type="FunCoup" id="P37968">
    <property type="interactions" value="89"/>
</dbReference>
<dbReference type="STRING" id="224308.BSU25530"/>
<dbReference type="PaxDb" id="224308-BSU25530"/>
<dbReference type="EnsemblBacteria" id="CAB14495">
    <property type="protein sequence ID" value="CAB14495"/>
    <property type="gene ID" value="BSU_25530"/>
</dbReference>
<dbReference type="GeneID" id="937842"/>
<dbReference type="KEGG" id="bsu:BSU25530"/>
<dbReference type="PATRIC" id="fig|224308.179.peg.2774"/>
<dbReference type="eggNOG" id="COG0860">
    <property type="taxonomic scope" value="Bacteria"/>
</dbReference>
<dbReference type="InParanoid" id="P37968"/>
<dbReference type="OrthoDB" id="1633470at2"/>
<dbReference type="PhylomeDB" id="P37968"/>
<dbReference type="BioCyc" id="BSUB:BSU25530-MONOMER"/>
<dbReference type="Proteomes" id="UP000001570">
    <property type="component" value="Chromosome"/>
</dbReference>
<dbReference type="GO" id="GO:0030435">
    <property type="term" value="P:sporulation resulting in formation of a cellular spore"/>
    <property type="evidence" value="ECO:0007669"/>
    <property type="project" value="UniProtKB-KW"/>
</dbReference>
<dbReference type="InterPro" id="IPR010897">
    <property type="entry name" value="Spore_II_P"/>
</dbReference>
<dbReference type="NCBIfam" id="TIGR02867">
    <property type="entry name" value="spore_II_P"/>
    <property type="match status" value="1"/>
</dbReference>
<dbReference type="Pfam" id="PF07454">
    <property type="entry name" value="SpoIIP"/>
    <property type="match status" value="1"/>
</dbReference>
<dbReference type="SUPFAM" id="SSF53187">
    <property type="entry name" value="Zn-dependent exopeptidases"/>
    <property type="match status" value="1"/>
</dbReference>
<evidence type="ECO:0000256" key="1">
    <source>
        <dbReference type="SAM" id="MobiDB-lite"/>
    </source>
</evidence>
<accession>P37968</accession>
<protein>
    <recommendedName>
        <fullName>Stage II sporulation protein P</fullName>
    </recommendedName>
</protein>
<sequence>MRNKRRNRQIVVAVNGGKAVKAIFLFIVSLIVIFVLSGVLTSLRPELRPSSDSFYGIAEELPGDVFAHLLQMENHYFASDLSQTDSSFHLSRLSLKLATSINLEDPRSFLGRELPGFAQFDTEILLAGQGTDYTNMPAESPPPSKVMEEEREANLAEIEKQQTQSDNAQKDPPKQTTGDKKVVFIYHTHNTESYLPLLKGETDPDMARHSKANVTLVGDMFGQALESQGIGATVNKTDIQSKLNKKGLNYARSYDESRPVVKDALASNKNLQYIIDIHRDSRRKKDTTATIKGKSYARVAFVVGKKSKNFEENYKIASELHKLMEKKYPGLSTGVFSKGSPGDNGVYNQDLTDRALLLEFGGVDNNLEELQRAANAAADVFSEMYWDAEKVNAASGETKKQ</sequence>
<keyword id="KW-1185">Reference proteome</keyword>
<keyword id="KW-0749">Sporulation</keyword>
<name>SP2P_BACSU</name>
<organism>
    <name type="scientific">Bacillus subtilis (strain 168)</name>
    <dbReference type="NCBI Taxonomy" id="224308"/>
    <lineage>
        <taxon>Bacteria</taxon>
        <taxon>Bacillati</taxon>
        <taxon>Bacillota</taxon>
        <taxon>Bacilli</taxon>
        <taxon>Bacillales</taxon>
        <taxon>Bacillaceae</taxon>
        <taxon>Bacillus</taxon>
    </lineage>
</organism>
<gene>
    <name type="primary">spoIIP</name>
    <name type="ordered locus">BSU25530</name>
</gene>
<feature type="chain" id="PRO_0000072060" description="Stage II sporulation protein P">
    <location>
        <begin position="1"/>
        <end position="401"/>
    </location>
</feature>
<feature type="region of interest" description="Disordered" evidence="1">
    <location>
        <begin position="131"/>
        <end position="179"/>
    </location>
</feature>
<feature type="compositionally biased region" description="Basic and acidic residues" evidence="1">
    <location>
        <begin position="146"/>
        <end position="160"/>
    </location>
</feature>
<feature type="compositionally biased region" description="Basic and acidic residues" evidence="1">
    <location>
        <begin position="168"/>
        <end position="179"/>
    </location>
</feature>
<proteinExistence type="predicted"/>